<keyword id="KW-0067">ATP-binding</keyword>
<keyword id="KW-0227">DNA damage</keyword>
<keyword id="KW-0233">DNA recombination</keyword>
<keyword id="KW-0234">DNA repair</keyword>
<keyword id="KW-0238">DNA-binding</keyword>
<keyword id="KW-0347">Helicase</keyword>
<keyword id="KW-0378">Hydrolase</keyword>
<keyword id="KW-0413">Isomerase</keyword>
<keyword id="KW-0479">Metal-binding</keyword>
<keyword id="KW-0547">Nucleotide-binding</keyword>
<keyword id="KW-1185">Reference proteome</keyword>
<keyword id="KW-0742">SOS response</keyword>
<keyword id="KW-0862">Zinc</keyword>
<evidence type="ECO:0000250" key="1">
    <source>
        <dbReference type="UniProtKB" id="P15043"/>
    </source>
</evidence>
<evidence type="ECO:0000255" key="2">
    <source>
        <dbReference type="PROSITE-ProRule" id="PRU00328"/>
    </source>
</evidence>
<evidence type="ECO:0000255" key="3">
    <source>
        <dbReference type="PROSITE-ProRule" id="PRU00541"/>
    </source>
</evidence>
<evidence type="ECO:0000255" key="4">
    <source>
        <dbReference type="PROSITE-ProRule" id="PRU00542"/>
    </source>
</evidence>
<evidence type="ECO:0000303" key="5">
    <source>
    </source>
</evidence>
<evidence type="ECO:0000305" key="6"/>
<comment type="function">
    <text evidence="1">An ATP-dependent DNA helicase which unwinds DNA in a 3'-5' direction. Binds to and unwinds a wide variety of substrates including 3- and 4-way junctions (including Holliday junctions), flayed duplexes, 5'- and 3'-overhangs, blunt end duplexes and G-quadruplex DNA. Involved in the RecF recombination pathway.</text>
</comment>
<comment type="catalytic activity">
    <reaction evidence="1">
        <text>Couples ATP hydrolysis with the unwinding of duplex DNA by translocating in the 3'-5' direction.</text>
        <dbReference type="EC" id="5.6.2.4"/>
    </reaction>
</comment>
<comment type="catalytic activity">
    <reaction evidence="1">
        <text>ATP + H2O = ADP + phosphate + H(+)</text>
        <dbReference type="Rhea" id="RHEA:13065"/>
        <dbReference type="ChEBI" id="CHEBI:15377"/>
        <dbReference type="ChEBI" id="CHEBI:15378"/>
        <dbReference type="ChEBI" id="CHEBI:30616"/>
        <dbReference type="ChEBI" id="CHEBI:43474"/>
        <dbReference type="ChEBI" id="CHEBI:456216"/>
    </reaction>
</comment>
<comment type="cofactor">
    <cofactor evidence="1">
        <name>Mg(2+)</name>
        <dbReference type="ChEBI" id="CHEBI:18420"/>
    </cofactor>
    <text evidence="1">Requires Mg(2+) for helicase activity.</text>
</comment>
<comment type="cofactor">
    <cofactor evidence="1">
        <name>Zn(2+)</name>
        <dbReference type="ChEBI" id="CHEBI:29105"/>
    </cofactor>
</comment>
<comment type="similarity">
    <text evidence="6">Belongs to the helicase family. RecQ subfamily.</text>
</comment>
<comment type="sequence caution" evidence="6">
    <conflict type="erroneous initiation">
        <sequence resource="EMBL-CDS" id="AAF33434"/>
    </conflict>
    <text>Extended N-terminus.</text>
</comment>
<comment type="sequence caution" evidence="6">
    <conflict type="erroneous initiation">
        <sequence resource="EMBL-CDS" id="AAL22802"/>
    </conflict>
    <text>Extended N-terminus.</text>
</comment>
<proteinExistence type="inferred from homology"/>
<name>RECQ_SALTY</name>
<dbReference type="EC" id="5.6.2.4" evidence="1"/>
<dbReference type="EMBL" id="AF233324">
    <property type="protein sequence ID" value="AAF33434.1"/>
    <property type="status" value="ALT_INIT"/>
    <property type="molecule type" value="Genomic_DNA"/>
</dbReference>
<dbReference type="EMBL" id="AE006468">
    <property type="protein sequence ID" value="AAL22802.1"/>
    <property type="status" value="ALT_INIT"/>
    <property type="molecule type" value="Genomic_DNA"/>
</dbReference>
<dbReference type="EMBL" id="X76900">
    <property type="status" value="NOT_ANNOTATED_CDS"/>
    <property type="molecule type" value="Genomic_DNA"/>
</dbReference>
<dbReference type="RefSeq" id="NP_462843.1">
    <property type="nucleotide sequence ID" value="NC_003197.2"/>
</dbReference>
<dbReference type="RefSeq" id="WP_000247124.1">
    <property type="nucleotide sequence ID" value="NC_003197.2"/>
</dbReference>
<dbReference type="SMR" id="P40724"/>
<dbReference type="STRING" id="99287.STM3958"/>
<dbReference type="PaxDb" id="99287-STM3958"/>
<dbReference type="GeneID" id="1255484"/>
<dbReference type="KEGG" id="stm:STM3958"/>
<dbReference type="PATRIC" id="fig|99287.12.peg.4176"/>
<dbReference type="HOGENOM" id="CLU_001103_14_3_6"/>
<dbReference type="PhylomeDB" id="P40724"/>
<dbReference type="Proteomes" id="UP000001014">
    <property type="component" value="Chromosome"/>
</dbReference>
<dbReference type="GO" id="GO:0043590">
    <property type="term" value="C:bacterial nucleoid"/>
    <property type="evidence" value="ECO:0000318"/>
    <property type="project" value="GO_Central"/>
</dbReference>
<dbReference type="GO" id="GO:0005694">
    <property type="term" value="C:chromosome"/>
    <property type="evidence" value="ECO:0000318"/>
    <property type="project" value="GO_Central"/>
</dbReference>
<dbReference type="GO" id="GO:0005737">
    <property type="term" value="C:cytoplasm"/>
    <property type="evidence" value="ECO:0000318"/>
    <property type="project" value="GO_Central"/>
</dbReference>
<dbReference type="GO" id="GO:0030894">
    <property type="term" value="C:replisome"/>
    <property type="evidence" value="ECO:0000318"/>
    <property type="project" value="GO_Central"/>
</dbReference>
<dbReference type="GO" id="GO:0043138">
    <property type="term" value="F:3'-5' DNA helicase activity"/>
    <property type="evidence" value="ECO:0000318"/>
    <property type="project" value="GO_Central"/>
</dbReference>
<dbReference type="GO" id="GO:0005524">
    <property type="term" value="F:ATP binding"/>
    <property type="evidence" value="ECO:0007669"/>
    <property type="project" value="UniProtKB-KW"/>
</dbReference>
<dbReference type="GO" id="GO:0016887">
    <property type="term" value="F:ATP hydrolysis activity"/>
    <property type="evidence" value="ECO:0007669"/>
    <property type="project" value="RHEA"/>
</dbReference>
<dbReference type="GO" id="GO:0003677">
    <property type="term" value="F:DNA binding"/>
    <property type="evidence" value="ECO:0007669"/>
    <property type="project" value="UniProtKB-KW"/>
</dbReference>
<dbReference type="GO" id="GO:0009378">
    <property type="term" value="F:four-way junction helicase activity"/>
    <property type="evidence" value="ECO:0000318"/>
    <property type="project" value="GO_Central"/>
</dbReference>
<dbReference type="GO" id="GO:0046872">
    <property type="term" value="F:metal ion binding"/>
    <property type="evidence" value="ECO:0007669"/>
    <property type="project" value="UniProtKB-KW"/>
</dbReference>
<dbReference type="GO" id="GO:0006310">
    <property type="term" value="P:DNA recombination"/>
    <property type="evidence" value="ECO:0000318"/>
    <property type="project" value="GO_Central"/>
</dbReference>
<dbReference type="GO" id="GO:0006281">
    <property type="term" value="P:DNA repair"/>
    <property type="evidence" value="ECO:0000318"/>
    <property type="project" value="GO_Central"/>
</dbReference>
<dbReference type="GO" id="GO:0006260">
    <property type="term" value="P:DNA replication"/>
    <property type="evidence" value="ECO:0007669"/>
    <property type="project" value="InterPro"/>
</dbReference>
<dbReference type="GO" id="GO:0009432">
    <property type="term" value="P:SOS response"/>
    <property type="evidence" value="ECO:0007669"/>
    <property type="project" value="UniProtKB-KW"/>
</dbReference>
<dbReference type="CDD" id="cd17920">
    <property type="entry name" value="DEXHc_RecQ"/>
    <property type="match status" value="1"/>
</dbReference>
<dbReference type="CDD" id="cd18794">
    <property type="entry name" value="SF2_C_RecQ"/>
    <property type="match status" value="1"/>
</dbReference>
<dbReference type="FunFam" id="1.10.10.10:FF:000175">
    <property type="entry name" value="ATP-dependent DNA helicase RecQ"/>
    <property type="match status" value="1"/>
</dbReference>
<dbReference type="FunFam" id="1.10.150.80:FF:000002">
    <property type="entry name" value="ATP-dependent DNA helicase RecQ"/>
    <property type="match status" value="1"/>
</dbReference>
<dbReference type="FunFam" id="3.40.50.300:FF:000296">
    <property type="entry name" value="ATP-dependent DNA helicase RecQ"/>
    <property type="match status" value="1"/>
</dbReference>
<dbReference type="FunFam" id="3.40.50.300:FF:000156">
    <property type="entry name" value="ATP-dependent DNA helicase recQ"/>
    <property type="match status" value="1"/>
</dbReference>
<dbReference type="Gene3D" id="1.10.150.80">
    <property type="entry name" value="HRDC domain"/>
    <property type="match status" value="1"/>
</dbReference>
<dbReference type="Gene3D" id="3.40.50.300">
    <property type="entry name" value="P-loop containing nucleotide triphosphate hydrolases"/>
    <property type="match status" value="2"/>
</dbReference>
<dbReference type="Gene3D" id="1.10.10.10">
    <property type="entry name" value="Winged helix-like DNA-binding domain superfamily/Winged helix DNA-binding domain"/>
    <property type="match status" value="1"/>
</dbReference>
<dbReference type="InterPro" id="IPR011545">
    <property type="entry name" value="DEAD/DEAH_box_helicase_dom"/>
</dbReference>
<dbReference type="InterPro" id="IPR004589">
    <property type="entry name" value="DNA_helicase_ATP-dep_RecQ"/>
</dbReference>
<dbReference type="InterPro" id="IPR006293">
    <property type="entry name" value="DNA_helicase_ATP-dep_RecQ_bac"/>
</dbReference>
<dbReference type="InterPro" id="IPR014001">
    <property type="entry name" value="Helicase_ATP-bd"/>
</dbReference>
<dbReference type="InterPro" id="IPR001650">
    <property type="entry name" value="Helicase_C-like"/>
</dbReference>
<dbReference type="InterPro" id="IPR010997">
    <property type="entry name" value="HRDC-like_sf"/>
</dbReference>
<dbReference type="InterPro" id="IPR002121">
    <property type="entry name" value="HRDC_dom"/>
</dbReference>
<dbReference type="InterPro" id="IPR044876">
    <property type="entry name" value="HRDC_dom_sf"/>
</dbReference>
<dbReference type="InterPro" id="IPR027417">
    <property type="entry name" value="P-loop_NTPase"/>
</dbReference>
<dbReference type="InterPro" id="IPR032284">
    <property type="entry name" value="RecQ_Zn-bd"/>
</dbReference>
<dbReference type="InterPro" id="IPR018982">
    <property type="entry name" value="RQC_domain"/>
</dbReference>
<dbReference type="InterPro" id="IPR036388">
    <property type="entry name" value="WH-like_DNA-bd_sf"/>
</dbReference>
<dbReference type="NCBIfam" id="NF008279">
    <property type="entry name" value="PRK11057.1"/>
    <property type="match status" value="1"/>
</dbReference>
<dbReference type="NCBIfam" id="TIGR01389">
    <property type="entry name" value="recQ"/>
    <property type="match status" value="1"/>
</dbReference>
<dbReference type="NCBIfam" id="TIGR00614">
    <property type="entry name" value="recQ_fam"/>
    <property type="match status" value="1"/>
</dbReference>
<dbReference type="PANTHER" id="PTHR13710:SF105">
    <property type="entry name" value="ATP-DEPENDENT DNA HELICASE Q1"/>
    <property type="match status" value="1"/>
</dbReference>
<dbReference type="PANTHER" id="PTHR13710">
    <property type="entry name" value="DNA HELICASE RECQ FAMILY MEMBER"/>
    <property type="match status" value="1"/>
</dbReference>
<dbReference type="Pfam" id="PF00270">
    <property type="entry name" value="DEAD"/>
    <property type="match status" value="1"/>
</dbReference>
<dbReference type="Pfam" id="PF00271">
    <property type="entry name" value="Helicase_C"/>
    <property type="match status" value="1"/>
</dbReference>
<dbReference type="Pfam" id="PF00570">
    <property type="entry name" value="HRDC"/>
    <property type="match status" value="1"/>
</dbReference>
<dbReference type="Pfam" id="PF16124">
    <property type="entry name" value="RecQ_Zn_bind"/>
    <property type="match status" value="1"/>
</dbReference>
<dbReference type="Pfam" id="PF09382">
    <property type="entry name" value="RQC"/>
    <property type="match status" value="1"/>
</dbReference>
<dbReference type="SMART" id="SM00487">
    <property type="entry name" value="DEXDc"/>
    <property type="match status" value="1"/>
</dbReference>
<dbReference type="SMART" id="SM00490">
    <property type="entry name" value="HELICc"/>
    <property type="match status" value="1"/>
</dbReference>
<dbReference type="SMART" id="SM00341">
    <property type="entry name" value="HRDC"/>
    <property type="match status" value="1"/>
</dbReference>
<dbReference type="SMART" id="SM00956">
    <property type="entry name" value="RQC"/>
    <property type="match status" value="1"/>
</dbReference>
<dbReference type="SUPFAM" id="SSF47819">
    <property type="entry name" value="HRDC-like"/>
    <property type="match status" value="1"/>
</dbReference>
<dbReference type="SUPFAM" id="SSF52540">
    <property type="entry name" value="P-loop containing nucleoside triphosphate hydrolases"/>
    <property type="match status" value="2"/>
</dbReference>
<dbReference type="PROSITE" id="PS51192">
    <property type="entry name" value="HELICASE_ATP_BIND_1"/>
    <property type="match status" value="1"/>
</dbReference>
<dbReference type="PROSITE" id="PS51194">
    <property type="entry name" value="HELICASE_CTER"/>
    <property type="match status" value="1"/>
</dbReference>
<dbReference type="PROSITE" id="PS50967">
    <property type="entry name" value="HRDC"/>
    <property type="match status" value="1"/>
</dbReference>
<sequence length="609" mass="68321">MAQAEVLNLESGAKQVLQETFGYQQFRPGQEAIIDTALSGRDCLVVMPTGGGKSLCYQIPALLLDGLTVVVSPLISLMKDQVDQLLANGVAAACLNSTQSREQQLEVMAGCRTGQIRLLYIAPERLMLDNFLDHLAHWNPVLLAVDEAHCISQWGHDFRPEYAALGQLRQRFPALPFMALTATADDTTRQDIIRLLGLNDPLIQISSFDRPNIRYMLMEKFKPLDQLMRYVQEQRGKSGIIYCNSRAKVEDTAARLQSRGISAAAYHAGLENAIRVDVQEKFQRDDLQIVVATVAFGMGINKPNVRFVVHFDIPRNIESYYQETGRAGRDGLPAEAMLFYDPADMAWLRRCLEEKPAGQLQDIERHKLNAMGAFAEAQTCRRLVLLNYFGEGRQEPCGNCDICLDPPKQYDGLNDAQIALSTIGRVNQRFGMGYVVEVIRGANNQRIRDFGHDKLKVYGMGREKSHEHWVSVIRQLIHLGLVMQNIAQHSALQLTDAARPVLRGDVPLKLAVPRIVALKPRVMQKSFGGNYDRKLFAKLRKLRKAIADEENIPPYVVFNDATLIEMAEQMPVSASEMLSVNGVGMRKLERFGKEFMALIRAHVDGDDEE</sequence>
<feature type="chain" id="PRO_0000205034" description="ATP-dependent DNA helicase RecQ">
    <location>
        <begin position="1"/>
        <end position="609"/>
    </location>
</feature>
<feature type="domain" description="Helicase ATP-binding" evidence="3">
    <location>
        <begin position="34"/>
        <end position="202"/>
    </location>
</feature>
<feature type="domain" description="Helicase C-terminal" evidence="4">
    <location>
        <begin position="223"/>
        <end position="371"/>
    </location>
</feature>
<feature type="domain" description="HRDC" evidence="2">
    <location>
        <begin position="529"/>
        <end position="609"/>
    </location>
</feature>
<feature type="short sequence motif" description="DEAH box">
    <location>
        <begin position="146"/>
        <end position="149"/>
    </location>
</feature>
<feature type="binding site" evidence="3">
    <location>
        <begin position="47"/>
        <end position="54"/>
    </location>
    <ligand>
        <name>ATP</name>
        <dbReference type="ChEBI" id="CHEBI:30616"/>
    </ligand>
</feature>
<feature type="binding site" evidence="1">
    <location>
        <position position="380"/>
    </location>
    <ligand>
        <name>Zn(2+)</name>
        <dbReference type="ChEBI" id="CHEBI:29105"/>
    </ligand>
</feature>
<feature type="binding site" evidence="1">
    <location>
        <position position="397"/>
    </location>
    <ligand>
        <name>Zn(2+)</name>
        <dbReference type="ChEBI" id="CHEBI:29105"/>
    </ligand>
</feature>
<feature type="binding site" evidence="1">
    <location>
        <position position="400"/>
    </location>
    <ligand>
        <name>Zn(2+)</name>
        <dbReference type="ChEBI" id="CHEBI:29105"/>
    </ligand>
</feature>
<feature type="binding site" evidence="1">
    <location>
        <position position="403"/>
    </location>
    <ligand>
        <name>Zn(2+)</name>
        <dbReference type="ChEBI" id="CHEBI:29105"/>
    </ligand>
</feature>
<gene>
    <name evidence="5" type="primary">recQ</name>
    <name type="ordered locus">STM3958</name>
    <name type="ORF">STMD1.32</name>
</gene>
<accession>P40724</accession>
<accession>Q9L6N8</accession>
<protein>
    <recommendedName>
        <fullName evidence="5">ATP-dependent DNA helicase RecQ</fullName>
        <ecNumber evidence="1">5.6.2.4</ecNumber>
    </recommendedName>
    <alternativeName>
        <fullName evidence="6">DNA 3'-5' helicase RecQ</fullName>
    </alternativeName>
</protein>
<organism>
    <name type="scientific">Salmonella typhimurium (strain LT2 / SGSC1412 / ATCC 700720)</name>
    <dbReference type="NCBI Taxonomy" id="99287"/>
    <lineage>
        <taxon>Bacteria</taxon>
        <taxon>Pseudomonadati</taxon>
        <taxon>Pseudomonadota</taxon>
        <taxon>Gammaproteobacteria</taxon>
        <taxon>Enterobacterales</taxon>
        <taxon>Enterobacteriaceae</taxon>
        <taxon>Salmonella</taxon>
    </lineage>
</organism>
<reference key="1">
    <citation type="journal article" date="2001" name="Nature">
        <title>Complete genome sequence of Salmonella enterica serovar Typhimurium LT2.</title>
        <authorList>
            <person name="McClelland M."/>
            <person name="Sanderson K.E."/>
            <person name="Spieth J."/>
            <person name="Clifton S.W."/>
            <person name="Latreille P."/>
            <person name="Courtney L."/>
            <person name="Porwollik S."/>
            <person name="Ali J."/>
            <person name="Dante M."/>
            <person name="Du F."/>
            <person name="Hou S."/>
            <person name="Layman D."/>
            <person name="Leonard S."/>
            <person name="Nguyen C."/>
            <person name="Scott K."/>
            <person name="Holmes A."/>
            <person name="Grewal N."/>
            <person name="Mulvaney E."/>
            <person name="Ryan E."/>
            <person name="Sun H."/>
            <person name="Florea L."/>
            <person name="Miller W."/>
            <person name="Stoneking T."/>
            <person name="Nhan M."/>
            <person name="Waterston R."/>
            <person name="Wilson R.K."/>
        </authorList>
    </citation>
    <scope>NUCLEOTIDE SEQUENCE [LARGE SCALE GENOMIC DNA]</scope>
    <source>
        <strain>LT2 / SGSC1412 / ATCC 700720</strain>
    </source>
</reference>
<reference key="2">
    <citation type="journal article" date="1994" name="J. Bacteriol.">
        <title>Molecular characterization of enterobacterial pldA genes encoding outer membrane phospholipase A.</title>
        <authorList>
            <person name="Brok R.G.P.M."/>
            <person name="Brinkman E."/>
            <person name="van Boxtel R."/>
            <person name="Bekkers A.C.A.P."/>
            <person name="Verheij H.M."/>
            <person name="Tommassen J."/>
        </authorList>
    </citation>
    <scope>NUCLEOTIDE SEQUENCE [GENOMIC DNA] OF 1-20</scope>
</reference>